<gene>
    <name evidence="1" type="primary">pyrH</name>
    <name type="ordered locus">MmarC5_1253</name>
</gene>
<reference key="1">
    <citation type="submission" date="2007-03" db="EMBL/GenBank/DDBJ databases">
        <title>Complete sequence of chromosome of Methanococcus maripaludis C5.</title>
        <authorList>
            <consortium name="US DOE Joint Genome Institute"/>
            <person name="Copeland A."/>
            <person name="Lucas S."/>
            <person name="Lapidus A."/>
            <person name="Barry K."/>
            <person name="Glavina del Rio T."/>
            <person name="Dalin E."/>
            <person name="Tice H."/>
            <person name="Pitluck S."/>
            <person name="Chertkov O."/>
            <person name="Brettin T."/>
            <person name="Bruce D."/>
            <person name="Han C."/>
            <person name="Detter J.C."/>
            <person name="Schmutz J."/>
            <person name="Larimer F."/>
            <person name="Land M."/>
            <person name="Hauser L."/>
            <person name="Kyrpides N."/>
            <person name="Mikhailova N."/>
            <person name="Sieprawska-Lupa M."/>
            <person name="Whitman W.B."/>
            <person name="Richardson P."/>
        </authorList>
    </citation>
    <scope>NUCLEOTIDE SEQUENCE [LARGE SCALE GENOMIC DNA]</scope>
    <source>
        <strain>C5 / ATCC BAA-1333</strain>
    </source>
</reference>
<evidence type="ECO:0000255" key="1">
    <source>
        <dbReference type="HAMAP-Rule" id="MF_01220"/>
    </source>
</evidence>
<organism>
    <name type="scientific">Methanococcus maripaludis (strain C5 / ATCC BAA-1333)</name>
    <dbReference type="NCBI Taxonomy" id="402880"/>
    <lineage>
        <taxon>Archaea</taxon>
        <taxon>Methanobacteriati</taxon>
        <taxon>Methanobacteriota</taxon>
        <taxon>Methanomada group</taxon>
        <taxon>Methanococci</taxon>
        <taxon>Methanococcales</taxon>
        <taxon>Methanococcaceae</taxon>
        <taxon>Methanococcus</taxon>
    </lineage>
</organism>
<dbReference type="EC" id="2.7.4.22" evidence="1"/>
<dbReference type="EMBL" id="CP000609">
    <property type="protein sequence ID" value="ABO35551.1"/>
    <property type="molecule type" value="Genomic_DNA"/>
</dbReference>
<dbReference type="RefSeq" id="WP_011869003.1">
    <property type="nucleotide sequence ID" value="NC_009135.1"/>
</dbReference>
<dbReference type="SMR" id="A4FZB7"/>
<dbReference type="STRING" id="402880.MmarC5_1253"/>
<dbReference type="GeneID" id="4929091"/>
<dbReference type="KEGG" id="mmq:MmarC5_1253"/>
<dbReference type="eggNOG" id="arCOG00858">
    <property type="taxonomic scope" value="Archaea"/>
</dbReference>
<dbReference type="HOGENOM" id="CLU_079546_0_0_2"/>
<dbReference type="OrthoDB" id="372251at2157"/>
<dbReference type="UniPathway" id="UPA00159">
    <property type="reaction ID" value="UER00275"/>
</dbReference>
<dbReference type="Proteomes" id="UP000000253">
    <property type="component" value="Chromosome"/>
</dbReference>
<dbReference type="GO" id="GO:0005737">
    <property type="term" value="C:cytoplasm"/>
    <property type="evidence" value="ECO:0007669"/>
    <property type="project" value="UniProtKB-SubCell"/>
</dbReference>
<dbReference type="GO" id="GO:0005524">
    <property type="term" value="F:ATP binding"/>
    <property type="evidence" value="ECO:0007669"/>
    <property type="project" value="UniProtKB-KW"/>
</dbReference>
<dbReference type="GO" id="GO:0033862">
    <property type="term" value="F:UMP kinase activity"/>
    <property type="evidence" value="ECO:0007669"/>
    <property type="project" value="UniProtKB-EC"/>
</dbReference>
<dbReference type="GO" id="GO:0044210">
    <property type="term" value="P:'de novo' CTP biosynthetic process"/>
    <property type="evidence" value="ECO:0007669"/>
    <property type="project" value="UniProtKB-UniRule"/>
</dbReference>
<dbReference type="GO" id="GO:0006225">
    <property type="term" value="P:UDP biosynthetic process"/>
    <property type="evidence" value="ECO:0007669"/>
    <property type="project" value="TreeGrafter"/>
</dbReference>
<dbReference type="CDD" id="cd04253">
    <property type="entry name" value="AAK_UMPK-PyrH-Pf"/>
    <property type="match status" value="1"/>
</dbReference>
<dbReference type="Gene3D" id="3.40.1160.10">
    <property type="entry name" value="Acetylglutamate kinase-like"/>
    <property type="match status" value="1"/>
</dbReference>
<dbReference type="HAMAP" id="MF_01220_A">
    <property type="entry name" value="PyrH_A"/>
    <property type="match status" value="1"/>
</dbReference>
<dbReference type="InterPro" id="IPR036393">
    <property type="entry name" value="AceGlu_kinase-like_sf"/>
</dbReference>
<dbReference type="InterPro" id="IPR001048">
    <property type="entry name" value="Asp/Glu/Uridylate_kinase"/>
</dbReference>
<dbReference type="InterPro" id="IPR011817">
    <property type="entry name" value="Uridylate_kinase"/>
</dbReference>
<dbReference type="InterPro" id="IPR011818">
    <property type="entry name" value="Uridylate_kinase_arch/spir"/>
</dbReference>
<dbReference type="NCBIfam" id="TIGR02076">
    <property type="entry name" value="pyrH_arch"/>
    <property type="match status" value="1"/>
</dbReference>
<dbReference type="PANTHER" id="PTHR42833">
    <property type="entry name" value="URIDYLATE KINASE"/>
    <property type="match status" value="1"/>
</dbReference>
<dbReference type="PANTHER" id="PTHR42833:SF4">
    <property type="entry name" value="URIDYLATE KINASE PUMPKIN, CHLOROPLASTIC"/>
    <property type="match status" value="1"/>
</dbReference>
<dbReference type="Pfam" id="PF00696">
    <property type="entry name" value="AA_kinase"/>
    <property type="match status" value="1"/>
</dbReference>
<dbReference type="PIRSF" id="PIRSF005650">
    <property type="entry name" value="Uridylate_kin"/>
    <property type="match status" value="1"/>
</dbReference>
<dbReference type="SUPFAM" id="SSF53633">
    <property type="entry name" value="Carbamate kinase-like"/>
    <property type="match status" value="1"/>
</dbReference>
<comment type="function">
    <text evidence="1">Catalyzes the reversible phosphorylation of UMP to UDP.</text>
</comment>
<comment type="catalytic activity">
    <reaction evidence="1">
        <text>UMP + ATP = UDP + ADP</text>
        <dbReference type="Rhea" id="RHEA:24400"/>
        <dbReference type="ChEBI" id="CHEBI:30616"/>
        <dbReference type="ChEBI" id="CHEBI:57865"/>
        <dbReference type="ChEBI" id="CHEBI:58223"/>
        <dbReference type="ChEBI" id="CHEBI:456216"/>
        <dbReference type="EC" id="2.7.4.22"/>
    </reaction>
</comment>
<comment type="activity regulation">
    <text evidence="1">Inhibited by UTP.</text>
</comment>
<comment type="pathway">
    <text evidence="1">Pyrimidine metabolism; CTP biosynthesis via de novo pathway; UDP from UMP (UMPK route): step 1/1.</text>
</comment>
<comment type="subunit">
    <text evidence="1">Homohexamer.</text>
</comment>
<comment type="subcellular location">
    <subcellularLocation>
        <location evidence="1">Cytoplasm</location>
    </subcellularLocation>
</comment>
<comment type="similarity">
    <text evidence="1">Belongs to the UMP kinase family.</text>
</comment>
<feature type="chain" id="PRO_1000053953" description="Uridylate kinase">
    <location>
        <begin position="1"/>
        <end position="225"/>
    </location>
</feature>
<feature type="binding site" evidence="1">
    <location>
        <begin position="9"/>
        <end position="10"/>
    </location>
    <ligand>
        <name>ATP</name>
        <dbReference type="ChEBI" id="CHEBI:30616"/>
    </ligand>
</feature>
<feature type="binding site" evidence="1">
    <location>
        <position position="46"/>
    </location>
    <ligand>
        <name>UMP</name>
        <dbReference type="ChEBI" id="CHEBI:57865"/>
    </ligand>
</feature>
<feature type="binding site" evidence="1">
    <location>
        <position position="47"/>
    </location>
    <ligand>
        <name>ATP</name>
        <dbReference type="ChEBI" id="CHEBI:30616"/>
    </ligand>
</feature>
<feature type="binding site" evidence="1">
    <location>
        <position position="51"/>
    </location>
    <ligand>
        <name>ATP</name>
        <dbReference type="ChEBI" id="CHEBI:30616"/>
    </ligand>
</feature>
<feature type="binding site" evidence="1">
    <location>
        <position position="67"/>
    </location>
    <ligand>
        <name>UMP</name>
        <dbReference type="ChEBI" id="CHEBI:57865"/>
    </ligand>
</feature>
<feature type="binding site" evidence="1">
    <location>
        <begin position="115"/>
        <end position="121"/>
    </location>
    <ligand>
        <name>UMP</name>
        <dbReference type="ChEBI" id="CHEBI:57865"/>
    </ligand>
</feature>
<feature type="binding site" evidence="1">
    <location>
        <position position="141"/>
    </location>
    <ligand>
        <name>ATP</name>
        <dbReference type="ChEBI" id="CHEBI:30616"/>
    </ligand>
</feature>
<feature type="binding site" evidence="1">
    <location>
        <position position="142"/>
    </location>
    <ligand>
        <name>ATP</name>
        <dbReference type="ChEBI" id="CHEBI:30616"/>
    </ligand>
</feature>
<feature type="binding site" evidence="1">
    <location>
        <position position="147"/>
    </location>
    <ligand>
        <name>ATP</name>
        <dbReference type="ChEBI" id="CHEBI:30616"/>
    </ligand>
</feature>
<feature type="binding site" evidence="1">
    <location>
        <position position="150"/>
    </location>
    <ligand>
        <name>ATP</name>
        <dbReference type="ChEBI" id="CHEBI:30616"/>
    </ligand>
</feature>
<proteinExistence type="inferred from homology"/>
<accession>A4FZB7</accession>
<keyword id="KW-0067">ATP-binding</keyword>
<keyword id="KW-0963">Cytoplasm</keyword>
<keyword id="KW-0418">Kinase</keyword>
<keyword id="KW-0547">Nucleotide-binding</keyword>
<keyword id="KW-0665">Pyrimidine biosynthesis</keyword>
<keyword id="KW-0808">Transferase</keyword>
<name>PYRH_METM5</name>
<sequence length="225" mass="23938">MDVVFALGGSVLMPKEGASTENIQNYAKAFKKLKEMGHRVSVVVGGGNTARQYISVAREFTNESFCDEIGILATRMNSMLLISALGKDAVKQVPENFKDAELILNMDKILVMGGTHPAHTTDAVSATLAEFIDADLLVIATNVDGVYTKDPRCNEDAVKLDKINTKELLEITGSSSMSAGSSGVVDPLASKIIDRAELKTIVVKGIPEEILASVSGDHNGTTITP</sequence>
<protein>
    <recommendedName>
        <fullName evidence="1">Uridylate kinase</fullName>
        <shortName evidence="1">UK</shortName>
        <ecNumber evidence="1">2.7.4.22</ecNumber>
    </recommendedName>
    <alternativeName>
        <fullName evidence="1">Uridine monophosphate kinase</fullName>
        <shortName evidence="1">UMP kinase</shortName>
        <shortName evidence="1">UMPK</shortName>
    </alternativeName>
</protein>